<sequence length="35" mass="3990">MGKGRIRVEERIKAETDAEMQKATLLDQTQTKKGK</sequence>
<organism>
    <name type="scientific">Bacillus subtilis (strain 168)</name>
    <dbReference type="NCBI Taxonomy" id="224308"/>
    <lineage>
        <taxon>Bacteria</taxon>
        <taxon>Bacillati</taxon>
        <taxon>Bacillota</taxon>
        <taxon>Bacilli</taxon>
        <taxon>Bacillales</taxon>
        <taxon>Bacillaceae</taxon>
        <taxon>Bacillus</taxon>
    </lineage>
</organism>
<dbReference type="EMBL" id="Y14082">
    <property type="protein sequence ID" value="CAA74508.1"/>
    <property type="molecule type" value="Genomic_DNA"/>
</dbReference>
<dbReference type="EMBL" id="AL009126">
    <property type="protein sequence ID" value="CAB12802.1"/>
    <property type="molecule type" value="Genomic_DNA"/>
</dbReference>
<dbReference type="PIR" id="F69827">
    <property type="entry name" value="F69827"/>
</dbReference>
<dbReference type="RefSeq" id="NP_388844.1">
    <property type="nucleotide sequence ID" value="NC_000964.3"/>
</dbReference>
<dbReference type="RefSeq" id="WP_009966908.1">
    <property type="nucleotide sequence ID" value="NZ_OZ025638.1"/>
</dbReference>
<dbReference type="SMR" id="O07593"/>
<dbReference type="FunCoup" id="O07593">
    <property type="interactions" value="110"/>
</dbReference>
<dbReference type="STRING" id="224308.BSU09630"/>
<dbReference type="PaxDb" id="224308-BSU09630"/>
<dbReference type="EnsemblBacteria" id="CAB12802">
    <property type="protein sequence ID" value="CAB12802"/>
    <property type="gene ID" value="BSU_09630"/>
</dbReference>
<dbReference type="GeneID" id="939284"/>
<dbReference type="KEGG" id="bsu:BSU09630"/>
<dbReference type="PATRIC" id="fig|224308.179.peg.1036"/>
<dbReference type="InParanoid" id="O07593"/>
<dbReference type="OrthoDB" id="2925821at2"/>
<dbReference type="BioCyc" id="BSUB:BSU09630-MONOMER"/>
<dbReference type="Proteomes" id="UP000001570">
    <property type="component" value="Chromosome"/>
</dbReference>
<dbReference type="InterPro" id="IPR035384">
    <property type="entry name" value="YhdX-like"/>
</dbReference>
<dbReference type="Pfam" id="PF17444">
    <property type="entry name" value="YhdX"/>
    <property type="match status" value="1"/>
</dbReference>
<keyword id="KW-1185">Reference proteome</keyword>
<feature type="chain" id="PRO_0000049572" description="Uncharacterized protein YhdX">
    <location>
        <begin position="1"/>
        <end position="35"/>
    </location>
</feature>
<reference key="1">
    <citation type="journal article" date="1998" name="Microbiology">
        <title>The 172 kb prkA-addAB region from 83 degrees to 97 degrees of the Bacillus subtilis chromosome contains several dysfunctional genes, the glyB marker, many genes encoding transporter proteins, and the ubiquitous hit gene.</title>
        <authorList>
            <person name="Noback M.A."/>
            <person name="Holsappel S."/>
            <person name="Kiewiet R."/>
            <person name="Terpstra P."/>
            <person name="Wambutt R."/>
            <person name="Wedler H."/>
            <person name="Venema G."/>
            <person name="Bron S."/>
        </authorList>
    </citation>
    <scope>NUCLEOTIDE SEQUENCE [GENOMIC DNA]</scope>
    <source>
        <strain>168</strain>
    </source>
</reference>
<reference key="2">
    <citation type="journal article" date="1997" name="Nature">
        <title>The complete genome sequence of the Gram-positive bacterium Bacillus subtilis.</title>
        <authorList>
            <person name="Kunst F."/>
            <person name="Ogasawara N."/>
            <person name="Moszer I."/>
            <person name="Albertini A.M."/>
            <person name="Alloni G."/>
            <person name="Azevedo V."/>
            <person name="Bertero M.G."/>
            <person name="Bessieres P."/>
            <person name="Bolotin A."/>
            <person name="Borchert S."/>
            <person name="Borriss R."/>
            <person name="Boursier L."/>
            <person name="Brans A."/>
            <person name="Braun M."/>
            <person name="Brignell S.C."/>
            <person name="Bron S."/>
            <person name="Brouillet S."/>
            <person name="Bruschi C.V."/>
            <person name="Caldwell B."/>
            <person name="Capuano V."/>
            <person name="Carter N.M."/>
            <person name="Choi S.-K."/>
            <person name="Codani J.-J."/>
            <person name="Connerton I.F."/>
            <person name="Cummings N.J."/>
            <person name="Daniel R.A."/>
            <person name="Denizot F."/>
            <person name="Devine K.M."/>
            <person name="Duesterhoeft A."/>
            <person name="Ehrlich S.D."/>
            <person name="Emmerson P.T."/>
            <person name="Entian K.-D."/>
            <person name="Errington J."/>
            <person name="Fabret C."/>
            <person name="Ferrari E."/>
            <person name="Foulger D."/>
            <person name="Fritz C."/>
            <person name="Fujita M."/>
            <person name="Fujita Y."/>
            <person name="Fuma S."/>
            <person name="Galizzi A."/>
            <person name="Galleron N."/>
            <person name="Ghim S.-Y."/>
            <person name="Glaser P."/>
            <person name="Goffeau A."/>
            <person name="Golightly E.J."/>
            <person name="Grandi G."/>
            <person name="Guiseppi G."/>
            <person name="Guy B.J."/>
            <person name="Haga K."/>
            <person name="Haiech J."/>
            <person name="Harwood C.R."/>
            <person name="Henaut A."/>
            <person name="Hilbert H."/>
            <person name="Holsappel S."/>
            <person name="Hosono S."/>
            <person name="Hullo M.-F."/>
            <person name="Itaya M."/>
            <person name="Jones L.-M."/>
            <person name="Joris B."/>
            <person name="Karamata D."/>
            <person name="Kasahara Y."/>
            <person name="Klaerr-Blanchard M."/>
            <person name="Klein C."/>
            <person name="Kobayashi Y."/>
            <person name="Koetter P."/>
            <person name="Koningstein G."/>
            <person name="Krogh S."/>
            <person name="Kumano M."/>
            <person name="Kurita K."/>
            <person name="Lapidus A."/>
            <person name="Lardinois S."/>
            <person name="Lauber J."/>
            <person name="Lazarevic V."/>
            <person name="Lee S.-M."/>
            <person name="Levine A."/>
            <person name="Liu H."/>
            <person name="Masuda S."/>
            <person name="Mauel C."/>
            <person name="Medigue C."/>
            <person name="Medina N."/>
            <person name="Mellado R.P."/>
            <person name="Mizuno M."/>
            <person name="Moestl D."/>
            <person name="Nakai S."/>
            <person name="Noback M."/>
            <person name="Noone D."/>
            <person name="O'Reilly M."/>
            <person name="Ogawa K."/>
            <person name="Ogiwara A."/>
            <person name="Oudega B."/>
            <person name="Park S.-H."/>
            <person name="Parro V."/>
            <person name="Pohl T.M."/>
            <person name="Portetelle D."/>
            <person name="Porwollik S."/>
            <person name="Prescott A.M."/>
            <person name="Presecan E."/>
            <person name="Pujic P."/>
            <person name="Purnelle B."/>
            <person name="Rapoport G."/>
            <person name="Rey M."/>
            <person name="Reynolds S."/>
            <person name="Rieger M."/>
            <person name="Rivolta C."/>
            <person name="Rocha E."/>
            <person name="Roche B."/>
            <person name="Rose M."/>
            <person name="Sadaie Y."/>
            <person name="Sato T."/>
            <person name="Scanlan E."/>
            <person name="Schleich S."/>
            <person name="Schroeter R."/>
            <person name="Scoffone F."/>
            <person name="Sekiguchi J."/>
            <person name="Sekowska A."/>
            <person name="Seror S.J."/>
            <person name="Serror P."/>
            <person name="Shin B.-S."/>
            <person name="Soldo B."/>
            <person name="Sorokin A."/>
            <person name="Tacconi E."/>
            <person name="Takagi T."/>
            <person name="Takahashi H."/>
            <person name="Takemaru K."/>
            <person name="Takeuchi M."/>
            <person name="Tamakoshi A."/>
            <person name="Tanaka T."/>
            <person name="Terpstra P."/>
            <person name="Tognoni A."/>
            <person name="Tosato V."/>
            <person name="Uchiyama S."/>
            <person name="Vandenbol M."/>
            <person name="Vannier F."/>
            <person name="Vassarotti A."/>
            <person name="Viari A."/>
            <person name="Wambutt R."/>
            <person name="Wedler E."/>
            <person name="Wedler H."/>
            <person name="Weitzenegger T."/>
            <person name="Winters P."/>
            <person name="Wipat A."/>
            <person name="Yamamoto H."/>
            <person name="Yamane K."/>
            <person name="Yasumoto K."/>
            <person name="Yata K."/>
            <person name="Yoshida K."/>
            <person name="Yoshikawa H.-F."/>
            <person name="Zumstein E."/>
            <person name="Yoshikawa H."/>
            <person name="Danchin A."/>
        </authorList>
    </citation>
    <scope>NUCLEOTIDE SEQUENCE [LARGE SCALE GENOMIC DNA]</scope>
    <source>
        <strain>168</strain>
    </source>
</reference>
<gene>
    <name type="primary">yhdX</name>
    <name type="ordered locus">BSU09630</name>
</gene>
<proteinExistence type="predicted"/>
<accession>O07593</accession>
<protein>
    <recommendedName>
        <fullName>Uncharacterized protein YhdX</fullName>
    </recommendedName>
</protein>
<name>YHDX_BACSU</name>